<accession>Q9H2W6</accession>
<accession>B2RD75</accession>
<accession>Q9HBU8</accession>
<evidence type="ECO:0000255" key="1"/>
<evidence type="ECO:0000269" key="2">
    <source>
    </source>
</evidence>
<evidence type="ECO:0000269" key="3">
    <source>
    </source>
</evidence>
<evidence type="ECO:0000269" key="4">
    <source>
    </source>
</evidence>
<evidence type="ECO:0000269" key="5">
    <source>
    </source>
</evidence>
<evidence type="ECO:0000303" key="6">
    <source>
    </source>
</evidence>
<evidence type="ECO:0000305" key="7"/>
<evidence type="ECO:0000312" key="8">
    <source>
        <dbReference type="EMBL" id="AAG43507.1"/>
    </source>
</evidence>
<evidence type="ECO:0007744" key="9">
    <source>
        <dbReference type="PDB" id="3J7Y"/>
    </source>
</evidence>
<evidence type="ECO:0007744" key="10">
    <source>
        <dbReference type="PDB" id="3J9M"/>
    </source>
</evidence>
<evidence type="ECO:0007744" key="11">
    <source>
        <dbReference type="PDB" id="5OOL"/>
    </source>
</evidence>
<evidence type="ECO:0007744" key="12">
    <source>
        <dbReference type="PDB" id="5OOM"/>
    </source>
</evidence>
<evidence type="ECO:0007744" key="13">
    <source>
    </source>
</evidence>
<evidence type="ECO:0007829" key="14">
    <source>
        <dbReference type="PDB" id="3J7Y"/>
    </source>
</evidence>
<evidence type="ECO:0007829" key="15">
    <source>
        <dbReference type="PDB" id="7OF0"/>
    </source>
</evidence>
<evidence type="ECO:0007829" key="16">
    <source>
        <dbReference type="PDB" id="7OI7"/>
    </source>
</evidence>
<evidence type="ECO:0007829" key="17">
    <source>
        <dbReference type="PDB" id="7OIA"/>
    </source>
</evidence>
<evidence type="ECO:0007829" key="18">
    <source>
        <dbReference type="PDB" id="8QU5"/>
    </source>
</evidence>
<organism evidence="8">
    <name type="scientific">Homo sapiens</name>
    <name type="common">Human</name>
    <dbReference type="NCBI Taxonomy" id="9606"/>
    <lineage>
        <taxon>Eukaryota</taxon>
        <taxon>Metazoa</taxon>
        <taxon>Chordata</taxon>
        <taxon>Craniata</taxon>
        <taxon>Vertebrata</taxon>
        <taxon>Euteleostomi</taxon>
        <taxon>Mammalia</taxon>
        <taxon>Eutheria</taxon>
        <taxon>Euarchontoglires</taxon>
        <taxon>Primates</taxon>
        <taxon>Haplorrhini</taxon>
        <taxon>Catarrhini</taxon>
        <taxon>Hominidae</taxon>
        <taxon>Homo</taxon>
    </lineage>
</organism>
<dbReference type="EMBL" id="AF210056">
    <property type="protein sequence ID" value="AAG43507.1"/>
    <property type="molecule type" value="mRNA"/>
</dbReference>
<dbReference type="EMBL" id="AF205435">
    <property type="protein sequence ID" value="AAG33698.1"/>
    <property type="status" value="ALT_INIT"/>
    <property type="molecule type" value="mRNA"/>
</dbReference>
<dbReference type="EMBL" id="AK315434">
    <property type="protein sequence ID" value="BAG37822.1"/>
    <property type="molecule type" value="mRNA"/>
</dbReference>
<dbReference type="EMBL" id="CH471101">
    <property type="protein sequence ID" value="EAX01995.1"/>
    <property type="molecule type" value="Genomic_DNA"/>
</dbReference>
<dbReference type="EMBL" id="BC017883">
    <property type="protein sequence ID" value="AAH17883.1"/>
    <property type="molecule type" value="mRNA"/>
</dbReference>
<dbReference type="CCDS" id="CCDS10341.1"/>
<dbReference type="RefSeq" id="NP_071446.2">
    <property type="nucleotide sequence ID" value="NM_022163.3"/>
</dbReference>
<dbReference type="PDB" id="3J7Y">
    <property type="method" value="EM"/>
    <property type="resolution" value="3.40 A"/>
    <property type="chains" value="e=1-279"/>
</dbReference>
<dbReference type="PDB" id="3J9M">
    <property type="method" value="EM"/>
    <property type="resolution" value="3.50 A"/>
    <property type="chains" value="e=1-279"/>
</dbReference>
<dbReference type="PDB" id="5OOL">
    <property type="method" value="EM"/>
    <property type="resolution" value="3.06 A"/>
    <property type="chains" value="e=1-279"/>
</dbReference>
<dbReference type="PDB" id="5OOM">
    <property type="method" value="EM"/>
    <property type="resolution" value="3.03 A"/>
    <property type="chains" value="e=1-279"/>
</dbReference>
<dbReference type="PDB" id="6I9R">
    <property type="method" value="EM"/>
    <property type="resolution" value="3.90 A"/>
    <property type="chains" value="e=1-279"/>
</dbReference>
<dbReference type="PDB" id="6NU2">
    <property type="method" value="EM"/>
    <property type="resolution" value="3.90 A"/>
    <property type="chains" value="e=43-279"/>
</dbReference>
<dbReference type="PDB" id="6NU3">
    <property type="method" value="EM"/>
    <property type="resolution" value="4.40 A"/>
    <property type="chains" value="e=1-279"/>
</dbReference>
<dbReference type="PDB" id="6VLZ">
    <property type="method" value="EM"/>
    <property type="resolution" value="2.97 A"/>
    <property type="chains" value="e=1-279"/>
</dbReference>
<dbReference type="PDB" id="6VMI">
    <property type="method" value="EM"/>
    <property type="resolution" value="2.96 A"/>
    <property type="chains" value="e=1-279"/>
</dbReference>
<dbReference type="PDB" id="6ZM5">
    <property type="method" value="EM"/>
    <property type="resolution" value="2.89 A"/>
    <property type="chains" value="e=1-279"/>
</dbReference>
<dbReference type="PDB" id="6ZM6">
    <property type="method" value="EM"/>
    <property type="resolution" value="2.59 A"/>
    <property type="chains" value="e=1-279"/>
</dbReference>
<dbReference type="PDB" id="6ZS9">
    <property type="method" value="EM"/>
    <property type="resolution" value="4.00 A"/>
    <property type="chains" value="e=1-279"/>
</dbReference>
<dbReference type="PDB" id="6ZSA">
    <property type="method" value="EM"/>
    <property type="resolution" value="4.00 A"/>
    <property type="chains" value="e=1-279"/>
</dbReference>
<dbReference type="PDB" id="6ZSB">
    <property type="method" value="EM"/>
    <property type="resolution" value="4.50 A"/>
    <property type="chains" value="e=1-279"/>
</dbReference>
<dbReference type="PDB" id="6ZSC">
    <property type="method" value="EM"/>
    <property type="resolution" value="3.50 A"/>
    <property type="chains" value="e=1-279"/>
</dbReference>
<dbReference type="PDB" id="6ZSD">
    <property type="method" value="EM"/>
    <property type="resolution" value="3.70 A"/>
    <property type="chains" value="e=1-279"/>
</dbReference>
<dbReference type="PDB" id="6ZSE">
    <property type="method" value="EM"/>
    <property type="resolution" value="5.00 A"/>
    <property type="chains" value="e=1-279"/>
</dbReference>
<dbReference type="PDB" id="6ZSG">
    <property type="method" value="EM"/>
    <property type="resolution" value="4.00 A"/>
    <property type="chains" value="e=1-279"/>
</dbReference>
<dbReference type="PDB" id="7A5F">
    <property type="method" value="EM"/>
    <property type="resolution" value="4.40 A"/>
    <property type="chains" value="e3=1-279"/>
</dbReference>
<dbReference type="PDB" id="7A5G">
    <property type="method" value="EM"/>
    <property type="resolution" value="4.33 A"/>
    <property type="chains" value="e3=1-279"/>
</dbReference>
<dbReference type="PDB" id="7A5H">
    <property type="method" value="EM"/>
    <property type="resolution" value="3.30 A"/>
    <property type="chains" value="e=1-279"/>
</dbReference>
<dbReference type="PDB" id="7A5I">
    <property type="method" value="EM"/>
    <property type="resolution" value="3.70 A"/>
    <property type="chains" value="e3=1-279"/>
</dbReference>
<dbReference type="PDB" id="7A5J">
    <property type="method" value="EM"/>
    <property type="resolution" value="3.10 A"/>
    <property type="chains" value="e=1-279"/>
</dbReference>
<dbReference type="PDB" id="7A5K">
    <property type="method" value="EM"/>
    <property type="resolution" value="3.70 A"/>
    <property type="chains" value="e3=1-279"/>
</dbReference>
<dbReference type="PDB" id="7L08">
    <property type="method" value="EM"/>
    <property type="resolution" value="3.49 A"/>
    <property type="chains" value="e=1-279"/>
</dbReference>
<dbReference type="PDB" id="7L20">
    <property type="method" value="EM"/>
    <property type="resolution" value="3.15 A"/>
    <property type="chains" value="e=1-279"/>
</dbReference>
<dbReference type="PDB" id="7O9K">
    <property type="method" value="EM"/>
    <property type="resolution" value="3.10 A"/>
    <property type="chains" value="e=1-279"/>
</dbReference>
<dbReference type="PDB" id="7O9M">
    <property type="method" value="EM"/>
    <property type="resolution" value="2.50 A"/>
    <property type="chains" value="e=1-279"/>
</dbReference>
<dbReference type="PDB" id="7ODR">
    <property type="method" value="EM"/>
    <property type="resolution" value="2.90 A"/>
    <property type="chains" value="e=1-279"/>
</dbReference>
<dbReference type="PDB" id="7ODS">
    <property type="method" value="EM"/>
    <property type="resolution" value="3.10 A"/>
    <property type="chains" value="e=1-279"/>
</dbReference>
<dbReference type="PDB" id="7ODT">
    <property type="method" value="EM"/>
    <property type="resolution" value="3.10 A"/>
    <property type="chains" value="e=1-279"/>
</dbReference>
<dbReference type="PDB" id="7OF0">
    <property type="method" value="EM"/>
    <property type="resolution" value="2.20 A"/>
    <property type="chains" value="e=1-279"/>
</dbReference>
<dbReference type="PDB" id="7OF2">
    <property type="method" value="EM"/>
    <property type="resolution" value="2.70 A"/>
    <property type="chains" value="e=1-279"/>
</dbReference>
<dbReference type="PDB" id="7OF3">
    <property type="method" value="EM"/>
    <property type="resolution" value="2.70 A"/>
    <property type="chains" value="e=1-279"/>
</dbReference>
<dbReference type="PDB" id="7OF4">
    <property type="method" value="EM"/>
    <property type="resolution" value="2.70 A"/>
    <property type="chains" value="e=1-279"/>
</dbReference>
<dbReference type="PDB" id="7OF5">
    <property type="method" value="EM"/>
    <property type="resolution" value="2.90 A"/>
    <property type="chains" value="e=1-279"/>
</dbReference>
<dbReference type="PDB" id="7OF6">
    <property type="method" value="EM"/>
    <property type="resolution" value="2.60 A"/>
    <property type="chains" value="e=1-279"/>
</dbReference>
<dbReference type="PDB" id="7OF7">
    <property type="method" value="EM"/>
    <property type="resolution" value="2.50 A"/>
    <property type="chains" value="e=1-279"/>
</dbReference>
<dbReference type="PDB" id="7OG4">
    <property type="method" value="EM"/>
    <property type="resolution" value="3.80 A"/>
    <property type="chains" value="e=1-279"/>
</dbReference>
<dbReference type="PDB" id="7OI7">
    <property type="method" value="EM"/>
    <property type="resolution" value="3.50 A"/>
    <property type="chains" value="e=1-279"/>
</dbReference>
<dbReference type="PDB" id="7OI8">
    <property type="method" value="EM"/>
    <property type="resolution" value="3.50 A"/>
    <property type="chains" value="e=1-279"/>
</dbReference>
<dbReference type="PDB" id="7OI9">
    <property type="method" value="EM"/>
    <property type="resolution" value="3.30 A"/>
    <property type="chains" value="e=1-279"/>
</dbReference>
<dbReference type="PDB" id="7OIA">
    <property type="method" value="EM"/>
    <property type="resolution" value="3.20 A"/>
    <property type="chains" value="e=1-279"/>
</dbReference>
<dbReference type="PDB" id="7OIB">
    <property type="method" value="EM"/>
    <property type="resolution" value="3.30 A"/>
    <property type="chains" value="e=1-279"/>
</dbReference>
<dbReference type="PDB" id="7OIC">
    <property type="method" value="EM"/>
    <property type="resolution" value="3.10 A"/>
    <property type="chains" value="e=1-279"/>
</dbReference>
<dbReference type="PDB" id="7OID">
    <property type="method" value="EM"/>
    <property type="resolution" value="3.70 A"/>
    <property type="chains" value="e=1-279"/>
</dbReference>
<dbReference type="PDB" id="7OIE">
    <property type="method" value="EM"/>
    <property type="resolution" value="3.50 A"/>
    <property type="chains" value="e=1-279"/>
</dbReference>
<dbReference type="PDB" id="7PD3">
    <property type="method" value="EM"/>
    <property type="resolution" value="3.40 A"/>
    <property type="chains" value="e=1-279"/>
</dbReference>
<dbReference type="PDB" id="7PO4">
    <property type="method" value="EM"/>
    <property type="resolution" value="2.56 A"/>
    <property type="chains" value="e=1-279"/>
</dbReference>
<dbReference type="PDB" id="7QI4">
    <property type="method" value="EM"/>
    <property type="resolution" value="2.21 A"/>
    <property type="chains" value="e=1-279"/>
</dbReference>
<dbReference type="PDB" id="7QI5">
    <property type="method" value="EM"/>
    <property type="resolution" value="2.63 A"/>
    <property type="chains" value="e=1-279"/>
</dbReference>
<dbReference type="PDB" id="7QI6">
    <property type="method" value="EM"/>
    <property type="resolution" value="2.98 A"/>
    <property type="chains" value="e=1-279"/>
</dbReference>
<dbReference type="PDB" id="8ANY">
    <property type="method" value="EM"/>
    <property type="resolution" value="2.85 A"/>
    <property type="chains" value="e=1-279"/>
</dbReference>
<dbReference type="PDB" id="8K2A">
    <property type="method" value="EM"/>
    <property type="resolution" value="2.90 A"/>
    <property type="chains" value="Lt=1-279"/>
</dbReference>
<dbReference type="PDB" id="8K2B">
    <property type="method" value="EM"/>
    <property type="resolution" value="3.40 A"/>
    <property type="chains" value="Lt=1-279"/>
</dbReference>
<dbReference type="PDB" id="8OIR">
    <property type="method" value="EM"/>
    <property type="resolution" value="3.10 A"/>
    <property type="chains" value="Bv=1-279"/>
</dbReference>
<dbReference type="PDB" id="8OIT">
    <property type="method" value="EM"/>
    <property type="resolution" value="2.90 A"/>
    <property type="chains" value="Bv=1-279"/>
</dbReference>
<dbReference type="PDB" id="8PK0">
    <property type="method" value="EM"/>
    <property type="resolution" value="3.03 A"/>
    <property type="chains" value="e=1-279"/>
</dbReference>
<dbReference type="PDB" id="8QSJ">
    <property type="method" value="EM"/>
    <property type="resolution" value="3.00 A"/>
    <property type="chains" value="e=1-279"/>
</dbReference>
<dbReference type="PDB" id="8QU5">
    <property type="method" value="EM"/>
    <property type="resolution" value="2.42 A"/>
    <property type="chains" value="e=1-279"/>
</dbReference>
<dbReference type="PDB" id="8RRI">
    <property type="method" value="EM"/>
    <property type="resolution" value="2.40 A"/>
    <property type="chains" value="e=1-279"/>
</dbReference>
<dbReference type="PDB" id="8XT0">
    <property type="method" value="EM"/>
    <property type="resolution" value="3.20 A"/>
    <property type="chains" value="Lt=1-279"/>
</dbReference>
<dbReference type="PDB" id="8XT1">
    <property type="method" value="EM"/>
    <property type="resolution" value="3.10 A"/>
    <property type="chains" value="Lt=1-279"/>
</dbReference>
<dbReference type="PDB" id="8XT2">
    <property type="method" value="EM"/>
    <property type="resolution" value="3.30 A"/>
    <property type="chains" value="Lt=1-279"/>
</dbReference>
<dbReference type="PDB" id="8XT3">
    <property type="method" value="EM"/>
    <property type="resolution" value="3.10 A"/>
    <property type="chains" value="Lt=1-279"/>
</dbReference>
<dbReference type="PDBsum" id="3J7Y"/>
<dbReference type="PDBsum" id="3J9M"/>
<dbReference type="PDBsum" id="5OOL"/>
<dbReference type="PDBsum" id="5OOM"/>
<dbReference type="PDBsum" id="6I9R"/>
<dbReference type="PDBsum" id="6NU2"/>
<dbReference type="PDBsum" id="6NU3"/>
<dbReference type="PDBsum" id="6VLZ"/>
<dbReference type="PDBsum" id="6VMI"/>
<dbReference type="PDBsum" id="6ZM5"/>
<dbReference type="PDBsum" id="6ZM6"/>
<dbReference type="PDBsum" id="6ZS9"/>
<dbReference type="PDBsum" id="6ZSA"/>
<dbReference type="PDBsum" id="6ZSB"/>
<dbReference type="PDBsum" id="6ZSC"/>
<dbReference type="PDBsum" id="6ZSD"/>
<dbReference type="PDBsum" id="6ZSE"/>
<dbReference type="PDBsum" id="6ZSG"/>
<dbReference type="PDBsum" id="7A5F"/>
<dbReference type="PDBsum" id="7A5G"/>
<dbReference type="PDBsum" id="7A5H"/>
<dbReference type="PDBsum" id="7A5I"/>
<dbReference type="PDBsum" id="7A5J"/>
<dbReference type="PDBsum" id="7A5K"/>
<dbReference type="PDBsum" id="7L08"/>
<dbReference type="PDBsum" id="7L20"/>
<dbReference type="PDBsum" id="7O9K"/>
<dbReference type="PDBsum" id="7O9M"/>
<dbReference type="PDBsum" id="7ODR"/>
<dbReference type="PDBsum" id="7ODS"/>
<dbReference type="PDBsum" id="7ODT"/>
<dbReference type="PDBsum" id="7OF0"/>
<dbReference type="PDBsum" id="7OF2"/>
<dbReference type="PDBsum" id="7OF3"/>
<dbReference type="PDBsum" id="7OF4"/>
<dbReference type="PDBsum" id="7OF5"/>
<dbReference type="PDBsum" id="7OF6"/>
<dbReference type="PDBsum" id="7OF7"/>
<dbReference type="PDBsum" id="7OG4"/>
<dbReference type="PDBsum" id="7OI7"/>
<dbReference type="PDBsum" id="7OI8"/>
<dbReference type="PDBsum" id="7OI9"/>
<dbReference type="PDBsum" id="7OIA"/>
<dbReference type="PDBsum" id="7OIB"/>
<dbReference type="PDBsum" id="7OIC"/>
<dbReference type="PDBsum" id="7OID"/>
<dbReference type="PDBsum" id="7OIE"/>
<dbReference type="PDBsum" id="7PD3"/>
<dbReference type="PDBsum" id="7PO4"/>
<dbReference type="PDBsum" id="7QI4"/>
<dbReference type="PDBsum" id="7QI5"/>
<dbReference type="PDBsum" id="7QI6"/>
<dbReference type="PDBsum" id="8ANY"/>
<dbReference type="PDBsum" id="8K2A"/>
<dbReference type="PDBsum" id="8K2B"/>
<dbReference type="PDBsum" id="8OIR"/>
<dbReference type="PDBsum" id="8OIT"/>
<dbReference type="PDBsum" id="8PK0"/>
<dbReference type="PDBsum" id="8QSJ"/>
<dbReference type="PDBsum" id="8QU5"/>
<dbReference type="PDBsum" id="8RRI"/>
<dbReference type="PDBsum" id="8XT0"/>
<dbReference type="PDBsum" id="8XT1"/>
<dbReference type="PDBsum" id="8XT2"/>
<dbReference type="PDBsum" id="8XT3"/>
<dbReference type="EMDB" id="EMD-0514"/>
<dbReference type="EMDB" id="EMD-0515"/>
<dbReference type="EMDB" id="EMD-11278"/>
<dbReference type="EMDB" id="EMD-11279"/>
<dbReference type="EMDB" id="EMD-11390"/>
<dbReference type="EMDB" id="EMD-11391"/>
<dbReference type="EMDB" id="EMD-11392"/>
<dbReference type="EMDB" id="EMD-11393"/>
<dbReference type="EMDB" id="EMD-11394"/>
<dbReference type="EMDB" id="EMD-11395"/>
<dbReference type="EMDB" id="EMD-11397"/>
<dbReference type="EMDB" id="EMD-11641"/>
<dbReference type="EMDB" id="EMD-11642"/>
<dbReference type="EMDB" id="EMD-11643"/>
<dbReference type="EMDB" id="EMD-11644"/>
<dbReference type="EMDB" id="EMD-11645"/>
<dbReference type="EMDB" id="EMD-11646"/>
<dbReference type="EMDB" id="EMD-12763"/>
<dbReference type="EMDB" id="EMD-12764"/>
<dbReference type="EMDB" id="EMD-12845"/>
<dbReference type="EMDB" id="EMD-12846"/>
<dbReference type="EMDB" id="EMD-12847"/>
<dbReference type="EMDB" id="EMD-12865"/>
<dbReference type="EMDB" id="EMD-12867"/>
<dbReference type="EMDB" id="EMD-12868"/>
<dbReference type="EMDB" id="EMD-12869"/>
<dbReference type="EMDB" id="EMD-12870"/>
<dbReference type="EMDB" id="EMD-12871"/>
<dbReference type="EMDB" id="EMD-12872"/>
<dbReference type="EMDB" id="EMD-12877"/>
<dbReference type="EMDB" id="EMD-12920"/>
<dbReference type="EMDB" id="EMD-12921"/>
<dbReference type="EMDB" id="EMD-12922"/>
<dbReference type="EMDB" id="EMD-12923"/>
<dbReference type="EMDB" id="EMD-12924"/>
<dbReference type="EMDB" id="EMD-12925"/>
<dbReference type="EMDB" id="EMD-12926"/>
<dbReference type="EMDB" id="EMD-12927"/>
<dbReference type="EMDB" id="EMD-13329"/>
<dbReference type="EMDB" id="EMD-13562"/>
<dbReference type="EMDB" id="EMD-13980"/>
<dbReference type="EMDB" id="EMD-13981"/>
<dbReference type="EMDB" id="EMD-13982"/>
<dbReference type="EMDB" id="EMD-15544"/>
<dbReference type="EMDB" id="EMD-16897"/>
<dbReference type="EMDB" id="EMD-16899"/>
<dbReference type="EMDB" id="EMD-17719"/>
<dbReference type="EMDB" id="EMD-19460"/>
<dbReference type="EMDB" id="EMD-21233"/>
<dbReference type="EMDB" id="EMD-21242"/>
<dbReference type="EMDB" id="EMD-23096"/>
<dbReference type="EMDB" id="EMD-23121"/>
<dbReference type="EMDB" id="EMD-36836"/>
<dbReference type="EMDB" id="EMD-36837"/>
<dbReference type="EMDB" id="EMD-3842"/>
<dbReference type="EMDB" id="EMD-3843"/>
<dbReference type="EMDB" id="EMD-38632"/>
<dbReference type="EMDB" id="EMD-38633"/>
<dbReference type="EMDB" id="EMD-38634"/>
<dbReference type="EMDB" id="EMD-38635"/>
<dbReference type="EMDB" id="EMD-4434"/>
<dbReference type="SMR" id="Q9H2W6"/>
<dbReference type="BioGRID" id="117757">
    <property type="interactions" value="203"/>
</dbReference>
<dbReference type="ComplexPortal" id="CPX-5226">
    <property type="entry name" value="39S mitochondrial large ribosomal subunit"/>
</dbReference>
<dbReference type="CORUM" id="Q9H2W6"/>
<dbReference type="FunCoup" id="Q9H2W6">
    <property type="interactions" value="1243"/>
</dbReference>
<dbReference type="IntAct" id="Q9H2W6">
    <property type="interactions" value="90"/>
</dbReference>
<dbReference type="MINT" id="Q9H2W6"/>
<dbReference type="STRING" id="9606.ENSP00000312311"/>
<dbReference type="GlyGen" id="Q9H2W6">
    <property type="glycosylation" value="2 sites, 1 O-linked glycan (2 sites)"/>
</dbReference>
<dbReference type="iPTMnet" id="Q9H2W6"/>
<dbReference type="MetOSite" id="Q9H2W6"/>
<dbReference type="PhosphoSitePlus" id="Q9H2W6"/>
<dbReference type="SwissPalm" id="Q9H2W6"/>
<dbReference type="BioMuta" id="MRPL46"/>
<dbReference type="DMDM" id="52783325"/>
<dbReference type="jPOST" id="Q9H2W6"/>
<dbReference type="MassIVE" id="Q9H2W6"/>
<dbReference type="PaxDb" id="9606-ENSP00000312311"/>
<dbReference type="PeptideAtlas" id="Q9H2W6"/>
<dbReference type="ProteomicsDB" id="80610"/>
<dbReference type="Pumba" id="Q9H2W6"/>
<dbReference type="Antibodypedia" id="58578">
    <property type="antibodies" value="183 antibodies from 27 providers"/>
</dbReference>
<dbReference type="DNASU" id="26589"/>
<dbReference type="Ensembl" id="ENST00000312475.5">
    <property type="protein sequence ID" value="ENSP00000312311.4"/>
    <property type="gene ID" value="ENSG00000259494.2"/>
</dbReference>
<dbReference type="GeneID" id="26589"/>
<dbReference type="KEGG" id="hsa:26589"/>
<dbReference type="MANE-Select" id="ENST00000312475.5">
    <property type="protein sequence ID" value="ENSP00000312311.4"/>
    <property type="RefSeq nucleotide sequence ID" value="NM_022163.4"/>
    <property type="RefSeq protein sequence ID" value="NP_071446.2"/>
</dbReference>
<dbReference type="UCSC" id="uc002bmj.3">
    <property type="organism name" value="human"/>
</dbReference>
<dbReference type="AGR" id="HGNC:1192"/>
<dbReference type="CTD" id="26589"/>
<dbReference type="DisGeNET" id="26589"/>
<dbReference type="GeneCards" id="MRPL46"/>
<dbReference type="HGNC" id="HGNC:1192">
    <property type="gene designation" value="MRPL46"/>
</dbReference>
<dbReference type="HPA" id="ENSG00000259494">
    <property type="expression patterns" value="Low tissue specificity"/>
</dbReference>
<dbReference type="MalaCards" id="MRPL46"/>
<dbReference type="MIM" id="611851">
    <property type="type" value="gene"/>
</dbReference>
<dbReference type="neXtProt" id="NX_Q9H2W6"/>
<dbReference type="PharmGKB" id="PA30978"/>
<dbReference type="VEuPathDB" id="HostDB:ENSG00000259494"/>
<dbReference type="eggNOG" id="KOG4548">
    <property type="taxonomic scope" value="Eukaryota"/>
</dbReference>
<dbReference type="GeneTree" id="ENSGT00390000015400"/>
<dbReference type="HOGENOM" id="CLU_079736_1_0_1"/>
<dbReference type="InParanoid" id="Q9H2W6"/>
<dbReference type="OMA" id="EKWDLYA"/>
<dbReference type="OrthoDB" id="194611at2759"/>
<dbReference type="PAN-GO" id="Q9H2W6">
    <property type="GO annotations" value="2 GO annotations based on evolutionary models"/>
</dbReference>
<dbReference type="PhylomeDB" id="Q9H2W6"/>
<dbReference type="PathwayCommons" id="Q9H2W6"/>
<dbReference type="Reactome" id="R-HSA-5368286">
    <property type="pathway name" value="Mitochondrial translation initiation"/>
</dbReference>
<dbReference type="Reactome" id="R-HSA-5389840">
    <property type="pathway name" value="Mitochondrial translation elongation"/>
</dbReference>
<dbReference type="Reactome" id="R-HSA-5419276">
    <property type="pathway name" value="Mitochondrial translation termination"/>
</dbReference>
<dbReference type="SignaLink" id="Q9H2W6"/>
<dbReference type="SIGNOR" id="Q9H2W6"/>
<dbReference type="BioGRID-ORCS" id="26589">
    <property type="hits" value="335 hits in 1163 CRISPR screens"/>
</dbReference>
<dbReference type="ChiTaRS" id="MRPL46">
    <property type="organism name" value="human"/>
</dbReference>
<dbReference type="EvolutionaryTrace" id="Q9H2W6"/>
<dbReference type="GenomeRNAi" id="26589"/>
<dbReference type="Pharos" id="Q9H2W6">
    <property type="development level" value="Tdark"/>
</dbReference>
<dbReference type="PRO" id="PR:Q9H2W6"/>
<dbReference type="Proteomes" id="UP000005640">
    <property type="component" value="Chromosome 15"/>
</dbReference>
<dbReference type="RNAct" id="Q9H2W6">
    <property type="molecule type" value="protein"/>
</dbReference>
<dbReference type="Bgee" id="ENSG00000259494">
    <property type="expression patterns" value="Expressed in adrenal tissue and 99 other cell types or tissues"/>
</dbReference>
<dbReference type="ExpressionAtlas" id="Q9H2W6">
    <property type="expression patterns" value="baseline and differential"/>
</dbReference>
<dbReference type="GO" id="GO:0030054">
    <property type="term" value="C:cell junction"/>
    <property type="evidence" value="ECO:0000314"/>
    <property type="project" value="HPA"/>
</dbReference>
<dbReference type="GO" id="GO:0005829">
    <property type="term" value="C:cytosol"/>
    <property type="evidence" value="ECO:0000314"/>
    <property type="project" value="HPA"/>
</dbReference>
<dbReference type="GO" id="GO:0005743">
    <property type="term" value="C:mitochondrial inner membrane"/>
    <property type="evidence" value="ECO:0000304"/>
    <property type="project" value="Reactome"/>
</dbReference>
<dbReference type="GO" id="GO:0005762">
    <property type="term" value="C:mitochondrial large ribosomal subunit"/>
    <property type="evidence" value="ECO:0000314"/>
    <property type="project" value="UniProtKB"/>
</dbReference>
<dbReference type="GO" id="GO:0005739">
    <property type="term" value="C:mitochondrion"/>
    <property type="evidence" value="ECO:0000314"/>
    <property type="project" value="UniProtKB"/>
</dbReference>
<dbReference type="GO" id="GO:0005654">
    <property type="term" value="C:nucleoplasm"/>
    <property type="evidence" value="ECO:0000314"/>
    <property type="project" value="HPA"/>
</dbReference>
<dbReference type="GO" id="GO:0003735">
    <property type="term" value="F:structural constituent of ribosome"/>
    <property type="evidence" value="ECO:0000318"/>
    <property type="project" value="GO_Central"/>
</dbReference>
<dbReference type="GO" id="GO:0032543">
    <property type="term" value="P:mitochondrial translation"/>
    <property type="evidence" value="ECO:0000303"/>
    <property type="project" value="ComplexPortal"/>
</dbReference>
<dbReference type="CDD" id="cd04661">
    <property type="entry name" value="NUDIX_MRP_L46"/>
    <property type="match status" value="1"/>
</dbReference>
<dbReference type="FunFam" id="3.90.79.10:FF:000018">
    <property type="entry name" value="39S ribosomal protein L46, mitochondrial"/>
    <property type="match status" value="1"/>
</dbReference>
<dbReference type="Gene3D" id="3.90.79.10">
    <property type="entry name" value="Nucleoside Triphosphate Pyrophosphohydrolase"/>
    <property type="match status" value="1"/>
</dbReference>
<dbReference type="InterPro" id="IPR015797">
    <property type="entry name" value="NUDIX_hydrolase-like_dom_sf"/>
</dbReference>
<dbReference type="InterPro" id="IPR040008">
    <property type="entry name" value="Ribosomal_mL46"/>
</dbReference>
<dbReference type="InterPro" id="IPR021757">
    <property type="entry name" value="Ribosomal_mL46_N"/>
</dbReference>
<dbReference type="InterPro" id="IPR033650">
    <property type="entry name" value="Ribosomal_mL46_NUDIX"/>
</dbReference>
<dbReference type="PANTHER" id="PTHR13124">
    <property type="entry name" value="39S RIBOSOMAL PROTEIN L46, MITOCHONDRIAL PRECURSOR-RELATED"/>
    <property type="match status" value="1"/>
</dbReference>
<dbReference type="PANTHER" id="PTHR13124:SF12">
    <property type="entry name" value="LARGE RIBOSOMAL SUBUNIT PROTEIN ML46"/>
    <property type="match status" value="1"/>
</dbReference>
<dbReference type="Pfam" id="PF11788">
    <property type="entry name" value="MRP-L46"/>
    <property type="match status" value="1"/>
</dbReference>
<dbReference type="SUPFAM" id="SSF55811">
    <property type="entry name" value="Nudix"/>
    <property type="match status" value="1"/>
</dbReference>
<keyword id="KW-0002">3D-structure</keyword>
<keyword id="KW-0007">Acetylation</keyword>
<keyword id="KW-0496">Mitochondrion</keyword>
<keyword id="KW-1267">Proteomics identification</keyword>
<keyword id="KW-1185">Reference proteome</keyword>
<keyword id="KW-0687">Ribonucleoprotein</keyword>
<keyword id="KW-0689">Ribosomal protein</keyword>
<keyword id="KW-0809">Transit peptide</keyword>
<sequence>MAAPVRRTLLGVAGGWRRFERLWAGSLSSRSLALAAAPSSNGSPWRLLGALCLQRPPVVSKPLTPLQEEMASLLQQIEIERSLYSDHELRALDENQRLAKKKADLHDEEDEQDILLAQDLEDMWEQKFLQFKLGARITEADEKNDRTSLNRKLDRNLVLLVREKFGDQDVWILPQAEWQPGETLRGTAERTLATLSENNMEAKFLGNAPCGHYTFKFPQAMRTESNLGAKVFFFKALLLTGDFSQAGNKGHHVWVTKDELGDYLKPKYLAQVRRFVSDL</sequence>
<protein>
    <recommendedName>
        <fullName evidence="6">Large ribosomal subunit protein mL46</fullName>
    </recommendedName>
    <alternativeName>
        <fullName>39S ribosomal protein L46, mitochondrial</fullName>
        <shortName>L46mt</shortName>
        <shortName>MRP-L46</shortName>
    </alternativeName>
    <alternativeName>
        <fullName>P2ECSL</fullName>
    </alternativeName>
</protein>
<feature type="transit peptide" description="Mitochondrion" evidence="1">
    <location>
        <begin position="1"/>
        <end status="unknown"/>
    </location>
</feature>
<feature type="chain" id="PRO_0000030576" description="Large ribosomal subunit protein mL46">
    <location>
        <begin status="unknown"/>
        <end position="279"/>
    </location>
</feature>
<feature type="modified residue" description="N6-acetyllysine" evidence="13">
    <location>
        <position position="230"/>
    </location>
</feature>
<feature type="sequence variant" id="VAR_052046" description="In dbSNP:rs16941888.">
    <original>H</original>
    <variation>Y</variation>
    <location>
        <position position="106"/>
    </location>
</feature>
<feature type="sequence conflict" description="In Ref. 2; AAG33698." evidence="7" ref="2">
    <original>E</original>
    <variation>K</variation>
    <location>
        <position position="197"/>
    </location>
</feature>
<feature type="strand" evidence="15">
    <location>
        <begin position="45"/>
        <end position="50"/>
    </location>
</feature>
<feature type="strand" evidence="15">
    <location>
        <begin position="52"/>
        <end position="55"/>
    </location>
</feature>
<feature type="helix" evidence="15">
    <location>
        <begin position="65"/>
        <end position="81"/>
    </location>
</feature>
<feature type="helix" evidence="18">
    <location>
        <begin position="86"/>
        <end position="89"/>
    </location>
</feature>
<feature type="helix" evidence="18">
    <location>
        <begin position="92"/>
        <end position="103"/>
    </location>
</feature>
<feature type="helix" evidence="15">
    <location>
        <begin position="117"/>
        <end position="130"/>
    </location>
</feature>
<feature type="turn" evidence="15">
    <location>
        <begin position="140"/>
        <end position="142"/>
    </location>
</feature>
<feature type="strand" evidence="15">
    <location>
        <begin position="146"/>
        <end position="148"/>
    </location>
</feature>
<feature type="helix" evidence="16">
    <location>
        <begin position="149"/>
        <end position="151"/>
    </location>
</feature>
<feature type="strand" evidence="15">
    <location>
        <begin position="153"/>
        <end position="155"/>
    </location>
</feature>
<feature type="strand" evidence="15">
    <location>
        <begin position="161"/>
        <end position="164"/>
    </location>
</feature>
<feature type="turn" evidence="14">
    <location>
        <begin position="165"/>
        <end position="167"/>
    </location>
</feature>
<feature type="strand" evidence="15">
    <location>
        <begin position="169"/>
        <end position="172"/>
    </location>
</feature>
<feature type="strand" evidence="15">
    <location>
        <begin position="175"/>
        <end position="177"/>
    </location>
</feature>
<feature type="strand" evidence="17">
    <location>
        <begin position="180"/>
        <end position="182"/>
    </location>
</feature>
<feature type="helix" evidence="15">
    <location>
        <begin position="184"/>
        <end position="194"/>
    </location>
</feature>
<feature type="strand" evidence="15">
    <location>
        <begin position="201"/>
        <end position="203"/>
    </location>
</feature>
<feature type="strand" evidence="15">
    <location>
        <begin position="210"/>
        <end position="213"/>
    </location>
</feature>
<feature type="strand" evidence="14">
    <location>
        <begin position="220"/>
        <end position="223"/>
    </location>
</feature>
<feature type="strand" evidence="15">
    <location>
        <begin position="228"/>
        <end position="233"/>
    </location>
</feature>
<feature type="strand" evidence="15">
    <location>
        <begin position="235"/>
        <end position="240"/>
    </location>
</feature>
<feature type="strand" evidence="15">
    <location>
        <begin position="245"/>
        <end position="247"/>
    </location>
</feature>
<feature type="strand" evidence="14">
    <location>
        <begin position="252"/>
        <end position="255"/>
    </location>
</feature>
<feature type="helix" evidence="15">
    <location>
        <begin position="259"/>
        <end position="263"/>
    </location>
</feature>
<feature type="helix" evidence="15">
    <location>
        <begin position="267"/>
        <end position="270"/>
    </location>
</feature>
<feature type="helix" evidence="15">
    <location>
        <begin position="272"/>
        <end position="274"/>
    </location>
</feature>
<gene>
    <name type="primary">MRPL46</name>
    <name type="synonym">C15orf4</name>
    <name type="synonym">LIECG2</name>
</gene>
<comment type="subunit">
    <text evidence="2 3 4 5">Component of the mitochondrial large ribosomal subunit (mt-LSU) (PubMed:25278503, PubMed:25838379, PubMed:28892042). Mature mammalian 55S mitochondrial ribosomes consist of a small (28S) and a large (39S) subunit. The 28S small subunit contains a 12S ribosomal RNA (12S mt-rRNA) and 30 different proteins. The 39S large subunit contains a 16S rRNA (16S mt-rRNA), a copy of mitochondrial valine transfer RNA (mt-tRNA(Val)), which plays an integral structural role, and 52 different proteins. mL46 is located at the central protuberance.</text>
</comment>
<comment type="subcellular location">
    <subcellularLocation>
        <location evidence="3 4 5">Mitochondrion</location>
    </subcellularLocation>
</comment>
<comment type="similarity">
    <text evidence="7">Belongs to the mitochondrion-specific ribosomal protein mL46 family.</text>
</comment>
<comment type="sequence caution" evidence="7">
    <conflict type="erroneous initiation">
        <sequence resource="EMBL-CDS" id="AAG33698"/>
    </conflict>
</comment>
<name>RM46_HUMAN</name>
<proteinExistence type="evidence at protein level"/>
<reference key="1">
    <citation type="journal article" date="2001" name="DNA Seq.">
        <title>Cloning, mapping and expression analysis of C15orf4, a novel human gene with homology to the yeast mitochondrial ribosomal protein Ym130 gene.</title>
        <authorList>
            <person name="Carim-Todd L."/>
            <person name="Sumoy L."/>
            <person name="Andreu N."/>
            <person name="Estivill X."/>
            <person name="Escarceller M."/>
        </authorList>
    </citation>
    <scope>NUCLEOTIDE SEQUENCE [MRNA]</scope>
</reference>
<reference evidence="7 8" key="2">
    <citation type="submission" date="1999-11" db="EMBL/GenBank/DDBJ databases">
        <title>A novel gene identified in vascular endothelial cells.</title>
        <authorList>
            <person name="Zhang K.M."/>
            <person name="Chen B.S."/>
        </authorList>
    </citation>
    <scope>NUCLEOTIDE SEQUENCE [MRNA]</scope>
</reference>
<reference key="3">
    <citation type="journal article" date="2004" name="Nat. Genet.">
        <title>Complete sequencing and characterization of 21,243 full-length human cDNAs.</title>
        <authorList>
            <person name="Ota T."/>
            <person name="Suzuki Y."/>
            <person name="Nishikawa T."/>
            <person name="Otsuki T."/>
            <person name="Sugiyama T."/>
            <person name="Irie R."/>
            <person name="Wakamatsu A."/>
            <person name="Hayashi K."/>
            <person name="Sato H."/>
            <person name="Nagai K."/>
            <person name="Kimura K."/>
            <person name="Makita H."/>
            <person name="Sekine M."/>
            <person name="Obayashi M."/>
            <person name="Nishi T."/>
            <person name="Shibahara T."/>
            <person name="Tanaka T."/>
            <person name="Ishii S."/>
            <person name="Yamamoto J."/>
            <person name="Saito K."/>
            <person name="Kawai Y."/>
            <person name="Isono Y."/>
            <person name="Nakamura Y."/>
            <person name="Nagahari K."/>
            <person name="Murakami K."/>
            <person name="Yasuda T."/>
            <person name="Iwayanagi T."/>
            <person name="Wagatsuma M."/>
            <person name="Shiratori A."/>
            <person name="Sudo H."/>
            <person name="Hosoiri T."/>
            <person name="Kaku Y."/>
            <person name="Kodaira H."/>
            <person name="Kondo H."/>
            <person name="Sugawara M."/>
            <person name="Takahashi M."/>
            <person name="Kanda K."/>
            <person name="Yokoi T."/>
            <person name="Furuya T."/>
            <person name="Kikkawa E."/>
            <person name="Omura Y."/>
            <person name="Abe K."/>
            <person name="Kamihara K."/>
            <person name="Katsuta N."/>
            <person name="Sato K."/>
            <person name="Tanikawa M."/>
            <person name="Yamazaki M."/>
            <person name="Ninomiya K."/>
            <person name="Ishibashi T."/>
            <person name="Yamashita H."/>
            <person name="Murakawa K."/>
            <person name="Fujimori K."/>
            <person name="Tanai H."/>
            <person name="Kimata M."/>
            <person name="Watanabe M."/>
            <person name="Hiraoka S."/>
            <person name="Chiba Y."/>
            <person name="Ishida S."/>
            <person name="Ono Y."/>
            <person name="Takiguchi S."/>
            <person name="Watanabe S."/>
            <person name="Yosida M."/>
            <person name="Hotuta T."/>
            <person name="Kusano J."/>
            <person name="Kanehori K."/>
            <person name="Takahashi-Fujii A."/>
            <person name="Hara H."/>
            <person name="Tanase T.-O."/>
            <person name="Nomura Y."/>
            <person name="Togiya S."/>
            <person name="Komai F."/>
            <person name="Hara R."/>
            <person name="Takeuchi K."/>
            <person name="Arita M."/>
            <person name="Imose N."/>
            <person name="Musashino K."/>
            <person name="Yuuki H."/>
            <person name="Oshima A."/>
            <person name="Sasaki N."/>
            <person name="Aotsuka S."/>
            <person name="Yoshikawa Y."/>
            <person name="Matsunawa H."/>
            <person name="Ichihara T."/>
            <person name="Shiohata N."/>
            <person name="Sano S."/>
            <person name="Moriya S."/>
            <person name="Momiyama H."/>
            <person name="Satoh N."/>
            <person name="Takami S."/>
            <person name="Terashima Y."/>
            <person name="Suzuki O."/>
            <person name="Nakagawa S."/>
            <person name="Senoh A."/>
            <person name="Mizoguchi H."/>
            <person name="Goto Y."/>
            <person name="Shimizu F."/>
            <person name="Wakebe H."/>
            <person name="Hishigaki H."/>
            <person name="Watanabe T."/>
            <person name="Sugiyama A."/>
            <person name="Takemoto M."/>
            <person name="Kawakami B."/>
            <person name="Yamazaki M."/>
            <person name="Watanabe K."/>
            <person name="Kumagai A."/>
            <person name="Itakura S."/>
            <person name="Fukuzumi Y."/>
            <person name="Fujimori Y."/>
            <person name="Komiyama M."/>
            <person name="Tashiro H."/>
            <person name="Tanigami A."/>
            <person name="Fujiwara T."/>
            <person name="Ono T."/>
            <person name="Yamada K."/>
            <person name="Fujii Y."/>
            <person name="Ozaki K."/>
            <person name="Hirao M."/>
            <person name="Ohmori Y."/>
            <person name="Kawabata A."/>
            <person name="Hikiji T."/>
            <person name="Kobatake N."/>
            <person name="Inagaki H."/>
            <person name="Ikema Y."/>
            <person name="Okamoto S."/>
            <person name="Okitani R."/>
            <person name="Kawakami T."/>
            <person name="Noguchi S."/>
            <person name="Itoh T."/>
            <person name="Shigeta K."/>
            <person name="Senba T."/>
            <person name="Matsumura K."/>
            <person name="Nakajima Y."/>
            <person name="Mizuno T."/>
            <person name="Morinaga M."/>
            <person name="Sasaki M."/>
            <person name="Togashi T."/>
            <person name="Oyama M."/>
            <person name="Hata H."/>
            <person name="Watanabe M."/>
            <person name="Komatsu T."/>
            <person name="Mizushima-Sugano J."/>
            <person name="Satoh T."/>
            <person name="Shirai Y."/>
            <person name="Takahashi Y."/>
            <person name="Nakagawa K."/>
            <person name="Okumura K."/>
            <person name="Nagase T."/>
            <person name="Nomura N."/>
            <person name="Kikuchi H."/>
            <person name="Masuho Y."/>
            <person name="Yamashita R."/>
            <person name="Nakai K."/>
            <person name="Yada T."/>
            <person name="Nakamura Y."/>
            <person name="Ohara O."/>
            <person name="Isogai T."/>
            <person name="Sugano S."/>
        </authorList>
    </citation>
    <scope>NUCLEOTIDE SEQUENCE [LARGE SCALE MRNA]</scope>
    <source>
        <tissue>Brain</tissue>
    </source>
</reference>
<reference evidence="7 8" key="4">
    <citation type="submission" date="2005-07" db="EMBL/GenBank/DDBJ databases">
        <authorList>
            <person name="Mural R.J."/>
            <person name="Istrail S."/>
            <person name="Sutton G.G."/>
            <person name="Florea L."/>
            <person name="Halpern A.L."/>
            <person name="Mobarry C.M."/>
            <person name="Lippert R."/>
            <person name="Walenz B."/>
            <person name="Shatkay H."/>
            <person name="Dew I."/>
            <person name="Miller J.R."/>
            <person name="Flanigan M.J."/>
            <person name="Edwards N.J."/>
            <person name="Bolanos R."/>
            <person name="Fasulo D."/>
            <person name="Halldorsson B.V."/>
            <person name="Hannenhalli S."/>
            <person name="Turner R."/>
            <person name="Yooseph S."/>
            <person name="Lu F."/>
            <person name="Nusskern D.R."/>
            <person name="Shue B.C."/>
            <person name="Zheng X.H."/>
            <person name="Zhong F."/>
            <person name="Delcher A.L."/>
            <person name="Huson D.H."/>
            <person name="Kravitz S.A."/>
            <person name="Mouchard L."/>
            <person name="Reinert K."/>
            <person name="Remington K.A."/>
            <person name="Clark A.G."/>
            <person name="Waterman M.S."/>
            <person name="Eichler E.E."/>
            <person name="Adams M.D."/>
            <person name="Hunkapiller M.W."/>
            <person name="Myers E.W."/>
            <person name="Venter J.C."/>
        </authorList>
    </citation>
    <scope>NUCLEOTIDE SEQUENCE [LARGE SCALE GENOMIC DNA]</scope>
</reference>
<reference key="5">
    <citation type="journal article" date="2004" name="Genome Res.">
        <title>The status, quality, and expansion of the NIH full-length cDNA project: the Mammalian Gene Collection (MGC).</title>
        <authorList>
            <consortium name="The MGC Project Team"/>
        </authorList>
    </citation>
    <scope>NUCLEOTIDE SEQUENCE [LARGE SCALE MRNA]</scope>
    <source>
        <tissue>Skeletal muscle</tissue>
    </source>
</reference>
<reference key="6">
    <citation type="journal article" date="2001" name="J. Biol. Chem.">
        <title>The large subunit of the mammalian mitochondrial ribosome. Analysis of the complement of ribosomal proteins present.</title>
        <authorList>
            <person name="Koc E.C."/>
            <person name="Burkhart W."/>
            <person name="Blackburn K."/>
            <person name="Moyer M.B."/>
            <person name="Schlatzer D.M."/>
            <person name="Moseley A."/>
            <person name="Spremulli L.L."/>
        </authorList>
    </citation>
    <scope>IDENTIFICATION</scope>
    <scope>SUBUNIT</scope>
</reference>
<reference key="7">
    <citation type="journal article" date="2009" name="Science">
        <title>Lysine acetylation targets protein complexes and co-regulates major cellular functions.</title>
        <authorList>
            <person name="Choudhary C."/>
            <person name="Kumar C."/>
            <person name="Gnad F."/>
            <person name="Nielsen M.L."/>
            <person name="Rehman M."/>
            <person name="Walther T.C."/>
            <person name="Olsen J.V."/>
            <person name="Mann M."/>
        </authorList>
    </citation>
    <scope>ACETYLATION [LARGE SCALE ANALYSIS] AT LYS-230</scope>
    <scope>IDENTIFICATION BY MASS SPECTROMETRY [LARGE SCALE ANALYSIS]</scope>
</reference>
<reference key="8">
    <citation type="journal article" date="2011" name="BMC Syst. Biol.">
        <title>Initial characterization of the human central proteome.</title>
        <authorList>
            <person name="Burkard T.R."/>
            <person name="Planyavsky M."/>
            <person name="Kaupe I."/>
            <person name="Breitwieser F.P."/>
            <person name="Buerckstuemmer T."/>
            <person name="Bennett K.L."/>
            <person name="Superti-Furga G."/>
            <person name="Colinge J."/>
        </authorList>
    </citation>
    <scope>IDENTIFICATION BY MASS SPECTROMETRY [LARGE SCALE ANALYSIS]</scope>
</reference>
<reference key="9">
    <citation type="journal article" date="2013" name="J. Proteome Res.">
        <title>Toward a comprehensive characterization of a human cancer cell phosphoproteome.</title>
        <authorList>
            <person name="Zhou H."/>
            <person name="Di Palma S."/>
            <person name="Preisinger C."/>
            <person name="Peng M."/>
            <person name="Polat A.N."/>
            <person name="Heck A.J."/>
            <person name="Mohammed S."/>
        </authorList>
    </citation>
    <scope>IDENTIFICATION BY MASS SPECTROMETRY [LARGE SCALE ANALYSIS]</scope>
    <source>
        <tissue>Erythroleukemia</tissue>
    </source>
</reference>
<reference key="10">
    <citation type="journal article" date="2015" name="Proteomics">
        <title>N-terminome analysis of the human mitochondrial proteome.</title>
        <authorList>
            <person name="Vaca Jacome A.S."/>
            <person name="Rabilloud T."/>
            <person name="Schaeffer-Reiss C."/>
            <person name="Rompais M."/>
            <person name="Ayoub D."/>
            <person name="Lane L."/>
            <person name="Bairoch A."/>
            <person name="Van Dorsselaer A."/>
            <person name="Carapito C."/>
        </authorList>
    </citation>
    <scope>IDENTIFICATION BY MASS SPECTROMETRY [LARGE SCALE ANALYSIS]</scope>
</reference>
<reference evidence="9" key="11">
    <citation type="journal article" date="2014" name="Science">
        <title>Structure of the large ribosomal subunit from human mitochondria.</title>
        <authorList>
            <person name="Brown A."/>
            <person name="Amunts A."/>
            <person name="Bai X.C."/>
            <person name="Sugimoto Y."/>
            <person name="Edwards P.C."/>
            <person name="Murshudov G."/>
            <person name="Scheres S.H."/>
            <person name="Ramakrishnan V."/>
        </authorList>
    </citation>
    <scope>STRUCTURE BY ELECTRON MICROSCOPY (3.40 ANGSTROMS)</scope>
    <scope>SUBCELLULAR LOCATION</scope>
    <scope>SUBUNIT</scope>
</reference>
<reference evidence="10" key="12">
    <citation type="journal article" date="2015" name="Science">
        <title>Ribosome. The structure of the human mitochondrial ribosome.</title>
        <authorList>
            <person name="Amunts A."/>
            <person name="Brown A."/>
            <person name="Toots J."/>
            <person name="Scheres S.H."/>
            <person name="Ramakrishnan V."/>
        </authorList>
    </citation>
    <scope>STRUCTURE BY ELECTRON MICROSCOPY (3.50 ANGSTROMS)</scope>
    <scope>SUBCELLULAR LOCATION</scope>
    <scope>SUBUNIT</scope>
</reference>
<reference evidence="11 12" key="13">
    <citation type="journal article" date="2017" name="Nat. Struct. Mol. Biol.">
        <title>Structures of the human mitochondrial ribosome in native states of assembly.</title>
        <authorList>
            <person name="Brown A."/>
            <person name="Rathore S."/>
            <person name="Kimanius D."/>
            <person name="Aibara S."/>
            <person name="Bai X.C."/>
            <person name="Rorbach J."/>
            <person name="Amunts A."/>
            <person name="Ramakrishnan V."/>
        </authorList>
    </citation>
    <scope>STRUCTURE BY ELECTRON MICROSCOPY (3.03 ANGSTROMS)</scope>
    <scope>SUBCELLULAR LOCATION</scope>
    <scope>SUBUNIT</scope>
</reference>